<dbReference type="EC" id="1.2.4.2" evidence="1"/>
<dbReference type="EMBL" id="AE016877">
    <property type="protein sequence ID" value="AAP08237.1"/>
    <property type="molecule type" value="Genomic_DNA"/>
</dbReference>
<dbReference type="RefSeq" id="NP_831036.1">
    <property type="nucleotide sequence ID" value="NC_004722.1"/>
</dbReference>
<dbReference type="RefSeq" id="WP_000197160.1">
    <property type="nucleotide sequence ID" value="NC_004722.1"/>
</dbReference>
<dbReference type="SMR" id="Q81GF2"/>
<dbReference type="STRING" id="226900.BC_1252"/>
<dbReference type="KEGG" id="bce:BC1252"/>
<dbReference type="PATRIC" id="fig|226900.8.peg.1225"/>
<dbReference type="HOGENOM" id="CLU_004709_1_0_9"/>
<dbReference type="OrthoDB" id="9759785at2"/>
<dbReference type="Proteomes" id="UP000001417">
    <property type="component" value="Chromosome"/>
</dbReference>
<dbReference type="GO" id="GO:0005829">
    <property type="term" value="C:cytosol"/>
    <property type="evidence" value="ECO:0000318"/>
    <property type="project" value="GO_Central"/>
</dbReference>
<dbReference type="GO" id="GO:0045252">
    <property type="term" value="C:oxoglutarate dehydrogenase complex"/>
    <property type="evidence" value="ECO:0000318"/>
    <property type="project" value="GO_Central"/>
</dbReference>
<dbReference type="GO" id="GO:0004591">
    <property type="term" value="F:oxoglutarate dehydrogenase (succinyl-transferring) activity"/>
    <property type="evidence" value="ECO:0000318"/>
    <property type="project" value="GO_Central"/>
</dbReference>
<dbReference type="GO" id="GO:0030976">
    <property type="term" value="F:thiamine pyrophosphate binding"/>
    <property type="evidence" value="ECO:0007669"/>
    <property type="project" value="UniProtKB-UniRule"/>
</dbReference>
<dbReference type="GO" id="GO:0006096">
    <property type="term" value="P:glycolytic process"/>
    <property type="evidence" value="ECO:0007669"/>
    <property type="project" value="UniProtKB-UniRule"/>
</dbReference>
<dbReference type="GO" id="GO:0006099">
    <property type="term" value="P:tricarboxylic acid cycle"/>
    <property type="evidence" value="ECO:0000318"/>
    <property type="project" value="GO_Central"/>
</dbReference>
<dbReference type="CDD" id="cd02016">
    <property type="entry name" value="TPP_E1_OGDC_like"/>
    <property type="match status" value="1"/>
</dbReference>
<dbReference type="FunFam" id="3.40.50.11610:FF:000002">
    <property type="entry name" value="2-oxoglutarate dehydrogenase E1 component"/>
    <property type="match status" value="1"/>
</dbReference>
<dbReference type="FunFam" id="3.40.50.970:FF:000036">
    <property type="entry name" value="2-oxoglutarate dehydrogenase E1 component"/>
    <property type="match status" value="1"/>
</dbReference>
<dbReference type="Gene3D" id="3.40.50.12470">
    <property type="match status" value="1"/>
</dbReference>
<dbReference type="Gene3D" id="3.40.50.970">
    <property type="match status" value="1"/>
</dbReference>
<dbReference type="Gene3D" id="3.40.50.11610">
    <property type="entry name" value="Multifunctional 2-oxoglutarate metabolism enzyme, C-terminal domain"/>
    <property type="match status" value="1"/>
</dbReference>
<dbReference type="HAMAP" id="MF_01169">
    <property type="entry name" value="SucA_OdhA"/>
    <property type="match status" value="1"/>
</dbReference>
<dbReference type="InterPro" id="IPR011603">
    <property type="entry name" value="2oxoglutarate_DH_E1"/>
</dbReference>
<dbReference type="InterPro" id="IPR023784">
    <property type="entry name" value="2oxoglutarate_DH_E1_bac"/>
</dbReference>
<dbReference type="InterPro" id="IPR001017">
    <property type="entry name" value="DH_E1"/>
</dbReference>
<dbReference type="InterPro" id="IPR042179">
    <property type="entry name" value="KGD_C_sf"/>
</dbReference>
<dbReference type="InterPro" id="IPR031717">
    <property type="entry name" value="ODO-1/KGD_C"/>
</dbReference>
<dbReference type="InterPro" id="IPR029061">
    <property type="entry name" value="THDP-binding"/>
</dbReference>
<dbReference type="InterPro" id="IPR005475">
    <property type="entry name" value="Transketolase-like_Pyr-bd"/>
</dbReference>
<dbReference type="NCBIfam" id="TIGR00239">
    <property type="entry name" value="2oxo_dh_E1"/>
    <property type="match status" value="1"/>
</dbReference>
<dbReference type="NCBIfam" id="NF006914">
    <property type="entry name" value="PRK09404.1"/>
    <property type="match status" value="1"/>
</dbReference>
<dbReference type="NCBIfam" id="NF008907">
    <property type="entry name" value="PRK12270.1"/>
    <property type="match status" value="1"/>
</dbReference>
<dbReference type="PANTHER" id="PTHR23152:SF4">
    <property type="entry name" value="2-OXOADIPATE DEHYDROGENASE COMPLEX COMPONENT E1"/>
    <property type="match status" value="1"/>
</dbReference>
<dbReference type="PANTHER" id="PTHR23152">
    <property type="entry name" value="2-OXOGLUTARATE DEHYDROGENASE"/>
    <property type="match status" value="1"/>
</dbReference>
<dbReference type="Pfam" id="PF00676">
    <property type="entry name" value="E1_dh"/>
    <property type="match status" value="1"/>
</dbReference>
<dbReference type="Pfam" id="PF16870">
    <property type="entry name" value="OxoGdeHyase_C"/>
    <property type="match status" value="1"/>
</dbReference>
<dbReference type="Pfam" id="PF02779">
    <property type="entry name" value="Transket_pyr"/>
    <property type="match status" value="1"/>
</dbReference>
<dbReference type="PIRSF" id="PIRSF000157">
    <property type="entry name" value="Oxoglu_dh_E1"/>
    <property type="match status" value="1"/>
</dbReference>
<dbReference type="SMART" id="SM00861">
    <property type="entry name" value="Transket_pyr"/>
    <property type="match status" value="1"/>
</dbReference>
<dbReference type="SUPFAM" id="SSF52518">
    <property type="entry name" value="Thiamin diphosphate-binding fold (THDP-binding)"/>
    <property type="match status" value="2"/>
</dbReference>
<evidence type="ECO:0000255" key="1">
    <source>
        <dbReference type="HAMAP-Rule" id="MF_01169"/>
    </source>
</evidence>
<protein>
    <recommendedName>
        <fullName evidence="1">2-oxoglutarate dehydrogenase E1 component</fullName>
        <ecNumber evidence="1">1.2.4.2</ecNumber>
    </recommendedName>
    <alternativeName>
        <fullName evidence="1">Alpha-ketoglutarate dehydrogenase</fullName>
    </alternativeName>
</protein>
<comment type="function">
    <text evidence="1">E1 component of the 2-oxoglutarate dehydrogenase (OGDH) complex which catalyzes the decarboxylation of 2-oxoglutarate, the first step in the conversion of 2-oxoglutarate to succinyl-CoA and CO(2).</text>
</comment>
<comment type="catalytic activity">
    <reaction evidence="1">
        <text>N(6)-[(R)-lipoyl]-L-lysyl-[protein] + 2-oxoglutarate + H(+) = N(6)-[(R)-S(8)-succinyldihydrolipoyl]-L-lysyl-[protein] + CO2</text>
        <dbReference type="Rhea" id="RHEA:12188"/>
        <dbReference type="Rhea" id="RHEA-COMP:10474"/>
        <dbReference type="Rhea" id="RHEA-COMP:20092"/>
        <dbReference type="ChEBI" id="CHEBI:15378"/>
        <dbReference type="ChEBI" id="CHEBI:16526"/>
        <dbReference type="ChEBI" id="CHEBI:16810"/>
        <dbReference type="ChEBI" id="CHEBI:83099"/>
        <dbReference type="ChEBI" id="CHEBI:83120"/>
        <dbReference type="EC" id="1.2.4.2"/>
    </reaction>
</comment>
<comment type="cofactor">
    <cofactor evidence="1">
        <name>thiamine diphosphate</name>
        <dbReference type="ChEBI" id="CHEBI:58937"/>
    </cofactor>
</comment>
<comment type="subunit">
    <text evidence="1">Homodimer. Part of the 2-oxoglutarate dehydrogenase (OGDH) complex composed of E1 (2-oxoglutarate dehydrogenase), E2 (dihydrolipoamide succinyltransferase) and E3 (dihydrolipoamide dehydrogenase); the complex contains multiple copies of the three enzymatic components (E1, E2 and E3).</text>
</comment>
<comment type="similarity">
    <text evidence="1">Belongs to the alpha-ketoglutarate dehydrogenase family.</text>
</comment>
<proteinExistence type="inferred from homology"/>
<organism>
    <name type="scientific">Bacillus cereus (strain ATCC 14579 / DSM 31 / CCUG 7414 / JCM 2152 / NBRC 15305 / NCIMB 9373 / NCTC 2599 / NRRL B-3711)</name>
    <dbReference type="NCBI Taxonomy" id="226900"/>
    <lineage>
        <taxon>Bacteria</taxon>
        <taxon>Bacillati</taxon>
        <taxon>Bacillota</taxon>
        <taxon>Bacilli</taxon>
        <taxon>Bacillales</taxon>
        <taxon>Bacillaceae</taxon>
        <taxon>Bacillus</taxon>
        <taxon>Bacillus cereus group</taxon>
    </lineage>
</organism>
<feature type="chain" id="PRO_0000162163" description="2-oxoglutarate dehydrogenase E1 component">
    <location>
        <begin position="1"/>
        <end position="955"/>
    </location>
</feature>
<reference key="1">
    <citation type="journal article" date="2003" name="Nature">
        <title>Genome sequence of Bacillus cereus and comparative analysis with Bacillus anthracis.</title>
        <authorList>
            <person name="Ivanova N."/>
            <person name="Sorokin A."/>
            <person name="Anderson I."/>
            <person name="Galleron N."/>
            <person name="Candelon B."/>
            <person name="Kapatral V."/>
            <person name="Bhattacharyya A."/>
            <person name="Reznik G."/>
            <person name="Mikhailova N."/>
            <person name="Lapidus A."/>
            <person name="Chu L."/>
            <person name="Mazur M."/>
            <person name="Goltsman E."/>
            <person name="Larsen N."/>
            <person name="D'Souza M."/>
            <person name="Walunas T."/>
            <person name="Grechkin Y."/>
            <person name="Pusch G."/>
            <person name="Haselkorn R."/>
            <person name="Fonstein M."/>
            <person name="Ehrlich S.D."/>
            <person name="Overbeek R."/>
            <person name="Kyrpides N.C."/>
        </authorList>
    </citation>
    <scope>NUCLEOTIDE SEQUENCE [LARGE SCALE GENOMIC DNA]</scope>
    <source>
        <strain>ATCC 14579 / DSM 31 / CCUG 7414 / JCM 2152 / NBRC 15305 / NCIMB 9373 / NCTC 2599 / NRRL B-3711</strain>
    </source>
</reference>
<sequence length="955" mass="106412">MTRKNTTTNPWAKFHGPNLGYVIEQYDLYVTGAGSVDPELQELFEIFGAPSFQDDVVTGDNTATHFSPQNTGNIEKILKVVQLVEQIRSFGHTLAHINPMEDAANGQSLLEKAMSELSDADLKAIPAKTVWQDAPEGIHTALDVIHRLKDVYTKSLAYEFSHIQDSEERAWLHQMVESNSLRQPLSNKKRTALLKRLTAVEGFEQFLHKTFVGQKRFSIEGVDMLVPVLDEIVLEGAKNGVEDVMIGMAHRGRLSVLAHVLEKPYSHMFAEFKHAKIEGAVANSGWTGDVKYHLGREQVVSNEEVSTRVTLANNPSHLEFVNPVVEGFARAAQENRKKSGLPDQDTSKSFVILVHGDAAFPGQGIVSETLNLSRLNAYQTGGTIHVIANNAVGFTTDSYDSRSTKYSSDLAKGFDIPIVHVNADDPEACLAAANLAIQYRMLFKKDFLIDLIGYRRYGHNEMDDPAVTQPQVYKKIKNHPTVRAIYADQLQAAGVLNADEVETITQFTQEQLKSDYAQVPPADTSDATIHVKVPDVVAKGIQPIDTGVEIDSLRAINEGLLSWPEGFNVYPKVKKILERRKDALEENGKIEWALAESLAFASILQEGTPIRLTGQDSQRGTFAHRHIVLHDTDTNETYSPLHRLPNINASFSVHNSPLSEAAVVGYEYGYNVFAPETLVMWEAQYGDFSNTAQALFDQYVSAGRAKWGQKSGLVLLLPHGYEGQGPEHSSARPERFLQLAAENNWTVANLTSAAQYFHILRRQASILGTEAVRPLVLMTPKSLLRHPLTLSTASQLSEGRFQPALEQENLGMKPNKVKRLVLSTGKMAIDLAAEIESGKHEYNLDEVHVVRIEQLYPFPAEKVQSIIKRFKNLEEIIWVQEEPRNMGAWHYMAPILFELAGDKVKTGYIGRPDRSSPSGGDPFAHKAEQELIVAHALDVKYNFRQDKQEIEVYSN</sequence>
<keyword id="KW-0324">Glycolysis</keyword>
<keyword id="KW-0560">Oxidoreductase</keyword>
<keyword id="KW-1185">Reference proteome</keyword>
<keyword id="KW-0786">Thiamine pyrophosphate</keyword>
<accession>Q81GF2</accession>
<name>ODO1_BACCR</name>
<gene>
    <name evidence="1" type="primary">odhA</name>
    <name type="ordered locus">BC_1252</name>
</gene>